<comment type="function">
    <text evidence="1">Has an important function as a repair enzyme for proteins that have been inactivated by oxidation. Catalyzes the reversible oxidation-reduction of methionine sulfoxide in proteins to methionine.</text>
</comment>
<comment type="catalytic activity">
    <reaction evidence="1">
        <text>L-methionyl-[protein] + [thioredoxin]-disulfide + H2O = L-methionyl-(S)-S-oxide-[protein] + [thioredoxin]-dithiol</text>
        <dbReference type="Rhea" id="RHEA:14217"/>
        <dbReference type="Rhea" id="RHEA-COMP:10698"/>
        <dbReference type="Rhea" id="RHEA-COMP:10700"/>
        <dbReference type="Rhea" id="RHEA-COMP:12313"/>
        <dbReference type="Rhea" id="RHEA-COMP:12315"/>
        <dbReference type="ChEBI" id="CHEBI:15377"/>
        <dbReference type="ChEBI" id="CHEBI:16044"/>
        <dbReference type="ChEBI" id="CHEBI:29950"/>
        <dbReference type="ChEBI" id="CHEBI:44120"/>
        <dbReference type="ChEBI" id="CHEBI:50058"/>
        <dbReference type="EC" id="1.8.4.11"/>
    </reaction>
</comment>
<comment type="catalytic activity">
    <reaction evidence="1">
        <text>[thioredoxin]-disulfide + L-methionine + H2O = L-methionine (S)-S-oxide + [thioredoxin]-dithiol</text>
        <dbReference type="Rhea" id="RHEA:19993"/>
        <dbReference type="Rhea" id="RHEA-COMP:10698"/>
        <dbReference type="Rhea" id="RHEA-COMP:10700"/>
        <dbReference type="ChEBI" id="CHEBI:15377"/>
        <dbReference type="ChEBI" id="CHEBI:29950"/>
        <dbReference type="ChEBI" id="CHEBI:50058"/>
        <dbReference type="ChEBI" id="CHEBI:57844"/>
        <dbReference type="ChEBI" id="CHEBI:58772"/>
        <dbReference type="EC" id="1.8.4.11"/>
    </reaction>
</comment>
<comment type="similarity">
    <text evidence="1">Belongs to the MsrA Met sulfoxide reductase family.</text>
</comment>
<accession>Q12TP4</accession>
<proteinExistence type="inferred from homology"/>
<name>MSRA_METBU</name>
<dbReference type="EC" id="1.8.4.11" evidence="1"/>
<dbReference type="EMBL" id="CP000300">
    <property type="protein sequence ID" value="ABE53182.1"/>
    <property type="molecule type" value="Genomic_DNA"/>
</dbReference>
<dbReference type="RefSeq" id="WP_011500317.1">
    <property type="nucleotide sequence ID" value="NC_007955.1"/>
</dbReference>
<dbReference type="SMR" id="Q12TP4"/>
<dbReference type="STRING" id="259564.Mbur_2328"/>
<dbReference type="GeneID" id="3998909"/>
<dbReference type="KEGG" id="mbu:Mbur_2328"/>
<dbReference type="HOGENOM" id="CLU_031040_10_0_2"/>
<dbReference type="OrthoDB" id="7150at2157"/>
<dbReference type="Proteomes" id="UP000001979">
    <property type="component" value="Chromosome"/>
</dbReference>
<dbReference type="GO" id="GO:0033744">
    <property type="term" value="F:L-methionine:thioredoxin-disulfide S-oxidoreductase activity"/>
    <property type="evidence" value="ECO:0007669"/>
    <property type="project" value="RHEA"/>
</dbReference>
<dbReference type="GO" id="GO:0008113">
    <property type="term" value="F:peptide-methionine (S)-S-oxide reductase activity"/>
    <property type="evidence" value="ECO:0007669"/>
    <property type="project" value="UniProtKB-UniRule"/>
</dbReference>
<dbReference type="GO" id="GO:0036211">
    <property type="term" value="P:protein modification process"/>
    <property type="evidence" value="ECO:0007669"/>
    <property type="project" value="UniProtKB-UniRule"/>
</dbReference>
<dbReference type="Gene3D" id="3.30.1060.10">
    <property type="entry name" value="Peptide methionine sulphoxide reductase MsrA"/>
    <property type="match status" value="1"/>
</dbReference>
<dbReference type="HAMAP" id="MF_01401">
    <property type="entry name" value="MsrA"/>
    <property type="match status" value="1"/>
</dbReference>
<dbReference type="InterPro" id="IPR002569">
    <property type="entry name" value="Met_Sox_Rdtase_MsrA_dom"/>
</dbReference>
<dbReference type="InterPro" id="IPR036509">
    <property type="entry name" value="Met_Sox_Rdtase_MsrA_sf"/>
</dbReference>
<dbReference type="NCBIfam" id="TIGR00401">
    <property type="entry name" value="msrA"/>
    <property type="match status" value="1"/>
</dbReference>
<dbReference type="PANTHER" id="PTHR43774">
    <property type="entry name" value="PEPTIDE METHIONINE SULFOXIDE REDUCTASE"/>
    <property type="match status" value="1"/>
</dbReference>
<dbReference type="PANTHER" id="PTHR43774:SF1">
    <property type="entry name" value="PEPTIDE METHIONINE SULFOXIDE REDUCTASE MSRA 2"/>
    <property type="match status" value="1"/>
</dbReference>
<dbReference type="Pfam" id="PF01625">
    <property type="entry name" value="PMSR"/>
    <property type="match status" value="1"/>
</dbReference>
<dbReference type="SUPFAM" id="SSF55068">
    <property type="entry name" value="Peptide methionine sulfoxide reductase"/>
    <property type="match status" value="1"/>
</dbReference>
<gene>
    <name evidence="1" type="primary">msrA</name>
    <name type="ordered locus">Mbur_2328</name>
</gene>
<evidence type="ECO:0000255" key="1">
    <source>
        <dbReference type="HAMAP-Rule" id="MF_01401"/>
    </source>
</evidence>
<organism>
    <name type="scientific">Methanococcoides burtonii (strain DSM 6242 / NBRC 107633 / OCM 468 / ACE-M)</name>
    <dbReference type="NCBI Taxonomy" id="259564"/>
    <lineage>
        <taxon>Archaea</taxon>
        <taxon>Methanobacteriati</taxon>
        <taxon>Methanobacteriota</taxon>
        <taxon>Stenosarchaea group</taxon>
        <taxon>Methanomicrobia</taxon>
        <taxon>Methanosarcinales</taxon>
        <taxon>Methanosarcinaceae</taxon>
        <taxon>Methanococcoides</taxon>
    </lineage>
</organism>
<keyword id="KW-0560">Oxidoreductase</keyword>
<reference key="1">
    <citation type="journal article" date="2009" name="ISME J.">
        <title>The genome sequence of the psychrophilic archaeon, Methanococcoides burtonii: the role of genome evolution in cold adaptation.</title>
        <authorList>
            <person name="Allen M.A."/>
            <person name="Lauro F.M."/>
            <person name="Williams T.J."/>
            <person name="Burg D."/>
            <person name="Siddiqui K.S."/>
            <person name="De Francisci D."/>
            <person name="Chong K.W."/>
            <person name="Pilak O."/>
            <person name="Chew H.H."/>
            <person name="De Maere M.Z."/>
            <person name="Ting L."/>
            <person name="Katrib M."/>
            <person name="Ng C."/>
            <person name="Sowers K.R."/>
            <person name="Galperin M.Y."/>
            <person name="Anderson I.J."/>
            <person name="Ivanova N."/>
            <person name="Dalin E."/>
            <person name="Martinez M."/>
            <person name="Lapidus A."/>
            <person name="Hauser L."/>
            <person name="Land M."/>
            <person name="Thomas T."/>
            <person name="Cavicchioli R."/>
        </authorList>
    </citation>
    <scope>NUCLEOTIDE SEQUENCE [LARGE SCALE GENOMIC DNA]</scope>
    <source>
        <strain>DSM 6242 / NBRC 107633 / OCM 468 / ACE-M</strain>
    </source>
</reference>
<protein>
    <recommendedName>
        <fullName evidence="1">Peptide methionine sulfoxide reductase MsrA</fullName>
        <shortName evidence="1">Protein-methionine-S-oxide reductase</shortName>
        <ecNumber evidence="1">1.8.4.11</ecNumber>
    </recommendedName>
    <alternativeName>
        <fullName evidence="1">Peptide-methionine (S)-S-oxide reductase</fullName>
        <shortName evidence="1">Peptide Met(O) reductase</shortName>
    </alternativeName>
</protein>
<sequence length="153" mass="17202">MERATFAAGCFWGVEAAFSKVEGVISTKVGYTGGTLKDPTYKDVSTGSTGHAESIDIIFDESVITYGELLEVLWNTHDPTTKDSQGPDHGSQYRSAIFYHDDAQREAALRSREQLERSGKYDSTIKTEIVKASEFSPAEDYHQKYFQKLQFKR</sequence>
<feature type="chain" id="PRO_1000087352" description="Peptide methionine sulfoxide reductase MsrA">
    <location>
        <begin position="1"/>
        <end position="153"/>
    </location>
</feature>
<feature type="active site" evidence="1">
    <location>
        <position position="10"/>
    </location>
</feature>